<comment type="function">
    <text evidence="1">Tetrapolymerization of the monopyrrole PBG into the hydroxymethylbilane pre-uroporphyrinogen in several discrete steps.</text>
</comment>
<comment type="catalytic activity">
    <reaction evidence="1">
        <text>4 porphobilinogen + H2O = hydroxymethylbilane + 4 NH4(+)</text>
        <dbReference type="Rhea" id="RHEA:13185"/>
        <dbReference type="ChEBI" id="CHEBI:15377"/>
        <dbReference type="ChEBI" id="CHEBI:28938"/>
        <dbReference type="ChEBI" id="CHEBI:57845"/>
        <dbReference type="ChEBI" id="CHEBI:58126"/>
        <dbReference type="EC" id="2.5.1.61"/>
    </reaction>
</comment>
<comment type="cofactor">
    <cofactor evidence="1">
        <name>dipyrromethane</name>
        <dbReference type="ChEBI" id="CHEBI:60342"/>
    </cofactor>
    <text evidence="1">Binds 1 dipyrromethane group covalently.</text>
</comment>
<comment type="pathway">
    <text evidence="1">Porphyrin-containing compound metabolism; protoporphyrin-IX biosynthesis; coproporphyrinogen-III from 5-aminolevulinate: step 2/4.</text>
</comment>
<comment type="subunit">
    <text evidence="1">Monomer.</text>
</comment>
<comment type="miscellaneous">
    <text evidence="1">The porphobilinogen subunits are added to the dipyrromethane group.</text>
</comment>
<comment type="similarity">
    <text evidence="1">Belongs to the HMBS family.</text>
</comment>
<sequence length="327" mass="34551">MNSETLAPTPPATLVIASRESRLAMWQAEHVRCALHKLYPSCDVKILGMTTRGDQILDRTLSKVGGKGLFVKELENALADGRADLAVHSLKDVPMELPEGFVLSTIMEREDPRDAFVSNQYDSLAALPAGSVVGTSSLRREAMLRARYPELVVKPLRGNLDTRLGKLDRGDYAAIILAAAGLKRLGLGERIRSLLDPADSLPAAGQGALGIEIRAGRDDLAAWLAPLHHEHTAAAVEAERMVSRTLGGSCEVPLAAYATWHDGALHLRGIVATPDGERVLSAQASAPAATTDAALELGREVASQLEAQGALDIVRALSTASGPAASA</sequence>
<feature type="chain" id="PRO_1000114139" description="Porphobilinogen deaminase">
    <location>
        <begin position="1"/>
        <end position="327"/>
    </location>
</feature>
<feature type="modified residue" description="S-(dipyrrolylmethanemethyl)cysteine" evidence="1">
    <location>
        <position position="250"/>
    </location>
</feature>
<reference key="1">
    <citation type="journal article" date="2014" name="Stand. Genomic Sci.">
        <title>Complete genome sequence of Burkholderia phymatum STM815(T), a broad host range and efficient nitrogen-fixing symbiont of Mimosa species.</title>
        <authorList>
            <person name="Moulin L."/>
            <person name="Klonowska A."/>
            <person name="Caroline B."/>
            <person name="Booth K."/>
            <person name="Vriezen J.A."/>
            <person name="Melkonian R."/>
            <person name="James E.K."/>
            <person name="Young J.P."/>
            <person name="Bena G."/>
            <person name="Hauser L."/>
            <person name="Land M."/>
            <person name="Kyrpides N."/>
            <person name="Bruce D."/>
            <person name="Chain P."/>
            <person name="Copeland A."/>
            <person name="Pitluck S."/>
            <person name="Woyke T."/>
            <person name="Lizotte-Waniewski M."/>
            <person name="Bristow J."/>
            <person name="Riley M."/>
        </authorList>
    </citation>
    <scope>NUCLEOTIDE SEQUENCE [LARGE SCALE GENOMIC DNA]</scope>
    <source>
        <strain>DSM 17167 / CIP 108236 / LMG 21445 / STM815</strain>
    </source>
</reference>
<organism>
    <name type="scientific">Paraburkholderia phymatum (strain DSM 17167 / CIP 108236 / LMG 21445 / STM815)</name>
    <name type="common">Burkholderia phymatum</name>
    <dbReference type="NCBI Taxonomy" id="391038"/>
    <lineage>
        <taxon>Bacteria</taxon>
        <taxon>Pseudomonadati</taxon>
        <taxon>Pseudomonadota</taxon>
        <taxon>Betaproteobacteria</taxon>
        <taxon>Burkholderiales</taxon>
        <taxon>Burkholderiaceae</taxon>
        <taxon>Paraburkholderia</taxon>
    </lineage>
</organism>
<keyword id="KW-0627">Porphyrin biosynthesis</keyword>
<keyword id="KW-1185">Reference proteome</keyword>
<keyword id="KW-0808">Transferase</keyword>
<dbReference type="EC" id="2.5.1.61" evidence="1"/>
<dbReference type="EMBL" id="CP001043">
    <property type="protein sequence ID" value="ACC71354.1"/>
    <property type="molecule type" value="Genomic_DNA"/>
</dbReference>
<dbReference type="RefSeq" id="WP_012401560.1">
    <property type="nucleotide sequence ID" value="NC_010622.1"/>
</dbReference>
<dbReference type="SMR" id="B2JEN9"/>
<dbReference type="STRING" id="391038.Bphy_2179"/>
<dbReference type="KEGG" id="bph:Bphy_2179"/>
<dbReference type="eggNOG" id="COG0181">
    <property type="taxonomic scope" value="Bacteria"/>
</dbReference>
<dbReference type="HOGENOM" id="CLU_019704_0_2_4"/>
<dbReference type="OrthoDB" id="9810298at2"/>
<dbReference type="UniPathway" id="UPA00251">
    <property type="reaction ID" value="UER00319"/>
</dbReference>
<dbReference type="Proteomes" id="UP000001192">
    <property type="component" value="Chromosome 1"/>
</dbReference>
<dbReference type="GO" id="GO:0005737">
    <property type="term" value="C:cytoplasm"/>
    <property type="evidence" value="ECO:0007669"/>
    <property type="project" value="TreeGrafter"/>
</dbReference>
<dbReference type="GO" id="GO:0004418">
    <property type="term" value="F:hydroxymethylbilane synthase activity"/>
    <property type="evidence" value="ECO:0007669"/>
    <property type="project" value="UniProtKB-UniRule"/>
</dbReference>
<dbReference type="GO" id="GO:0006782">
    <property type="term" value="P:protoporphyrinogen IX biosynthetic process"/>
    <property type="evidence" value="ECO:0007669"/>
    <property type="project" value="UniProtKB-UniRule"/>
</dbReference>
<dbReference type="CDD" id="cd13646">
    <property type="entry name" value="PBP2_EcHMBS_like"/>
    <property type="match status" value="1"/>
</dbReference>
<dbReference type="FunFam" id="3.40.190.10:FF:000004">
    <property type="entry name" value="Porphobilinogen deaminase"/>
    <property type="match status" value="1"/>
</dbReference>
<dbReference type="FunFam" id="3.40.190.10:FF:000005">
    <property type="entry name" value="Porphobilinogen deaminase"/>
    <property type="match status" value="1"/>
</dbReference>
<dbReference type="Gene3D" id="3.40.190.10">
    <property type="entry name" value="Periplasmic binding protein-like II"/>
    <property type="match status" value="2"/>
</dbReference>
<dbReference type="Gene3D" id="3.30.160.40">
    <property type="entry name" value="Porphobilinogen deaminase, C-terminal domain"/>
    <property type="match status" value="1"/>
</dbReference>
<dbReference type="HAMAP" id="MF_00260">
    <property type="entry name" value="Porphobil_deam"/>
    <property type="match status" value="1"/>
</dbReference>
<dbReference type="InterPro" id="IPR000860">
    <property type="entry name" value="HemC"/>
</dbReference>
<dbReference type="InterPro" id="IPR022419">
    <property type="entry name" value="Porphobilin_deaminase_cofac_BS"/>
</dbReference>
<dbReference type="InterPro" id="IPR022417">
    <property type="entry name" value="Porphobilin_deaminase_N"/>
</dbReference>
<dbReference type="InterPro" id="IPR022418">
    <property type="entry name" value="Porphobilinogen_deaminase_C"/>
</dbReference>
<dbReference type="InterPro" id="IPR036803">
    <property type="entry name" value="Porphobilinogen_deaminase_C_sf"/>
</dbReference>
<dbReference type="NCBIfam" id="TIGR00212">
    <property type="entry name" value="hemC"/>
    <property type="match status" value="1"/>
</dbReference>
<dbReference type="PANTHER" id="PTHR11557">
    <property type="entry name" value="PORPHOBILINOGEN DEAMINASE"/>
    <property type="match status" value="1"/>
</dbReference>
<dbReference type="PANTHER" id="PTHR11557:SF0">
    <property type="entry name" value="PORPHOBILINOGEN DEAMINASE"/>
    <property type="match status" value="1"/>
</dbReference>
<dbReference type="Pfam" id="PF01379">
    <property type="entry name" value="Porphobil_deam"/>
    <property type="match status" value="1"/>
</dbReference>
<dbReference type="Pfam" id="PF03900">
    <property type="entry name" value="Porphobil_deamC"/>
    <property type="match status" value="1"/>
</dbReference>
<dbReference type="PIRSF" id="PIRSF001438">
    <property type="entry name" value="4pyrrol_synth_OHMeBilane_synth"/>
    <property type="match status" value="1"/>
</dbReference>
<dbReference type="PRINTS" id="PR00151">
    <property type="entry name" value="PORPHBDMNASE"/>
</dbReference>
<dbReference type="SUPFAM" id="SSF53850">
    <property type="entry name" value="Periplasmic binding protein-like II"/>
    <property type="match status" value="1"/>
</dbReference>
<dbReference type="SUPFAM" id="SSF54782">
    <property type="entry name" value="Porphobilinogen deaminase (hydroxymethylbilane synthase), C-terminal domain"/>
    <property type="match status" value="1"/>
</dbReference>
<dbReference type="PROSITE" id="PS00533">
    <property type="entry name" value="PORPHOBILINOGEN_DEAM"/>
    <property type="match status" value="1"/>
</dbReference>
<evidence type="ECO:0000255" key="1">
    <source>
        <dbReference type="HAMAP-Rule" id="MF_00260"/>
    </source>
</evidence>
<gene>
    <name evidence="1" type="primary">hemC</name>
    <name type="ordered locus">Bphy_2179</name>
</gene>
<accession>B2JEN9</accession>
<proteinExistence type="inferred from homology"/>
<protein>
    <recommendedName>
        <fullName evidence="1">Porphobilinogen deaminase</fullName>
        <shortName evidence="1">PBG</shortName>
        <ecNumber evidence="1">2.5.1.61</ecNumber>
    </recommendedName>
    <alternativeName>
        <fullName evidence="1">Hydroxymethylbilane synthase</fullName>
        <shortName evidence="1">HMBS</shortName>
    </alternativeName>
    <alternativeName>
        <fullName evidence="1">Pre-uroporphyrinogen synthase</fullName>
    </alternativeName>
</protein>
<name>HEM3_PARP8</name>